<proteinExistence type="inferred from homology"/>
<dbReference type="EC" id="6.5.1.2" evidence="1"/>
<dbReference type="EMBL" id="CP000002">
    <property type="protein sequence ID" value="AAU22302.1"/>
    <property type="molecule type" value="Genomic_DNA"/>
</dbReference>
<dbReference type="EMBL" id="AE017333">
    <property type="protein sequence ID" value="AAU39652.1"/>
    <property type="molecule type" value="Genomic_DNA"/>
</dbReference>
<dbReference type="RefSeq" id="WP_003179573.1">
    <property type="nucleotide sequence ID" value="NC_006322.1"/>
</dbReference>
<dbReference type="SMR" id="Q65MR2"/>
<dbReference type="STRING" id="279010.BL00589"/>
<dbReference type="GeneID" id="92862703"/>
<dbReference type="KEGG" id="bld:BLi00716"/>
<dbReference type="KEGG" id="bli:BL00589"/>
<dbReference type="PATRIC" id="fig|279010.13.peg.703"/>
<dbReference type="eggNOG" id="COG0272">
    <property type="taxonomic scope" value="Bacteria"/>
</dbReference>
<dbReference type="HOGENOM" id="CLU_007764_2_1_9"/>
<dbReference type="Proteomes" id="UP000000606">
    <property type="component" value="Chromosome"/>
</dbReference>
<dbReference type="GO" id="GO:0005829">
    <property type="term" value="C:cytosol"/>
    <property type="evidence" value="ECO:0007669"/>
    <property type="project" value="TreeGrafter"/>
</dbReference>
<dbReference type="GO" id="GO:0003677">
    <property type="term" value="F:DNA binding"/>
    <property type="evidence" value="ECO:0007669"/>
    <property type="project" value="InterPro"/>
</dbReference>
<dbReference type="GO" id="GO:0003911">
    <property type="term" value="F:DNA ligase (NAD+) activity"/>
    <property type="evidence" value="ECO:0007669"/>
    <property type="project" value="UniProtKB-UniRule"/>
</dbReference>
<dbReference type="GO" id="GO:0046872">
    <property type="term" value="F:metal ion binding"/>
    <property type="evidence" value="ECO:0007669"/>
    <property type="project" value="UniProtKB-KW"/>
</dbReference>
<dbReference type="GO" id="GO:0006281">
    <property type="term" value="P:DNA repair"/>
    <property type="evidence" value="ECO:0007669"/>
    <property type="project" value="UniProtKB-KW"/>
</dbReference>
<dbReference type="GO" id="GO:0006260">
    <property type="term" value="P:DNA replication"/>
    <property type="evidence" value="ECO:0007669"/>
    <property type="project" value="UniProtKB-KW"/>
</dbReference>
<dbReference type="CDD" id="cd17748">
    <property type="entry name" value="BRCT_DNA_ligase_like"/>
    <property type="match status" value="1"/>
</dbReference>
<dbReference type="CDD" id="cd00114">
    <property type="entry name" value="LIGANc"/>
    <property type="match status" value="1"/>
</dbReference>
<dbReference type="FunFam" id="1.10.150.20:FF:000006">
    <property type="entry name" value="DNA ligase"/>
    <property type="match status" value="1"/>
</dbReference>
<dbReference type="FunFam" id="1.10.150.20:FF:000007">
    <property type="entry name" value="DNA ligase"/>
    <property type="match status" value="1"/>
</dbReference>
<dbReference type="FunFam" id="1.10.287.610:FF:000002">
    <property type="entry name" value="DNA ligase"/>
    <property type="match status" value="1"/>
</dbReference>
<dbReference type="FunFam" id="2.40.50.140:FF:000012">
    <property type="entry name" value="DNA ligase"/>
    <property type="match status" value="1"/>
</dbReference>
<dbReference type="FunFam" id="3.30.470.30:FF:000001">
    <property type="entry name" value="DNA ligase"/>
    <property type="match status" value="1"/>
</dbReference>
<dbReference type="FunFam" id="3.40.50.10190:FF:000026">
    <property type="entry name" value="DNA ligase"/>
    <property type="match status" value="1"/>
</dbReference>
<dbReference type="Gene3D" id="6.20.10.30">
    <property type="match status" value="1"/>
</dbReference>
<dbReference type="Gene3D" id="1.10.150.20">
    <property type="entry name" value="5' to 3' exonuclease, C-terminal subdomain"/>
    <property type="match status" value="2"/>
</dbReference>
<dbReference type="Gene3D" id="3.40.50.10190">
    <property type="entry name" value="BRCT domain"/>
    <property type="match status" value="1"/>
</dbReference>
<dbReference type="Gene3D" id="3.30.470.30">
    <property type="entry name" value="DNA ligase/mRNA capping enzyme"/>
    <property type="match status" value="1"/>
</dbReference>
<dbReference type="Gene3D" id="1.10.287.610">
    <property type="entry name" value="Helix hairpin bin"/>
    <property type="match status" value="1"/>
</dbReference>
<dbReference type="Gene3D" id="2.40.50.140">
    <property type="entry name" value="Nucleic acid-binding proteins"/>
    <property type="match status" value="1"/>
</dbReference>
<dbReference type="HAMAP" id="MF_01588">
    <property type="entry name" value="DNA_ligase_A"/>
    <property type="match status" value="1"/>
</dbReference>
<dbReference type="InterPro" id="IPR001357">
    <property type="entry name" value="BRCT_dom"/>
</dbReference>
<dbReference type="InterPro" id="IPR036420">
    <property type="entry name" value="BRCT_dom_sf"/>
</dbReference>
<dbReference type="InterPro" id="IPR041663">
    <property type="entry name" value="DisA/LigA_HHH"/>
</dbReference>
<dbReference type="InterPro" id="IPR001679">
    <property type="entry name" value="DNA_ligase"/>
</dbReference>
<dbReference type="InterPro" id="IPR018239">
    <property type="entry name" value="DNA_ligase_AS"/>
</dbReference>
<dbReference type="InterPro" id="IPR033136">
    <property type="entry name" value="DNA_ligase_CS"/>
</dbReference>
<dbReference type="InterPro" id="IPR013839">
    <property type="entry name" value="DNAligase_adenylation"/>
</dbReference>
<dbReference type="InterPro" id="IPR013840">
    <property type="entry name" value="DNAligase_N"/>
</dbReference>
<dbReference type="InterPro" id="IPR003583">
    <property type="entry name" value="Hlx-hairpin-Hlx_DNA-bd_motif"/>
</dbReference>
<dbReference type="InterPro" id="IPR012340">
    <property type="entry name" value="NA-bd_OB-fold"/>
</dbReference>
<dbReference type="InterPro" id="IPR004150">
    <property type="entry name" value="NAD_DNA_ligase_OB"/>
</dbReference>
<dbReference type="InterPro" id="IPR010994">
    <property type="entry name" value="RuvA_2-like"/>
</dbReference>
<dbReference type="InterPro" id="IPR004149">
    <property type="entry name" value="Znf_DNAligase_C4"/>
</dbReference>
<dbReference type="NCBIfam" id="TIGR00575">
    <property type="entry name" value="dnlj"/>
    <property type="match status" value="1"/>
</dbReference>
<dbReference type="NCBIfam" id="NF005932">
    <property type="entry name" value="PRK07956.1"/>
    <property type="match status" value="1"/>
</dbReference>
<dbReference type="PANTHER" id="PTHR23389">
    <property type="entry name" value="CHROMOSOME TRANSMISSION FIDELITY FACTOR 18"/>
    <property type="match status" value="1"/>
</dbReference>
<dbReference type="PANTHER" id="PTHR23389:SF9">
    <property type="entry name" value="DNA LIGASE"/>
    <property type="match status" value="1"/>
</dbReference>
<dbReference type="Pfam" id="PF00533">
    <property type="entry name" value="BRCT"/>
    <property type="match status" value="1"/>
</dbReference>
<dbReference type="Pfam" id="PF01653">
    <property type="entry name" value="DNA_ligase_aden"/>
    <property type="match status" value="1"/>
</dbReference>
<dbReference type="Pfam" id="PF03120">
    <property type="entry name" value="DNA_ligase_OB"/>
    <property type="match status" value="1"/>
</dbReference>
<dbReference type="Pfam" id="PF03119">
    <property type="entry name" value="DNA_ligase_ZBD"/>
    <property type="match status" value="1"/>
</dbReference>
<dbReference type="Pfam" id="PF12826">
    <property type="entry name" value="HHH_2"/>
    <property type="match status" value="1"/>
</dbReference>
<dbReference type="PIRSF" id="PIRSF001604">
    <property type="entry name" value="LigA"/>
    <property type="match status" value="1"/>
</dbReference>
<dbReference type="SMART" id="SM00292">
    <property type="entry name" value="BRCT"/>
    <property type="match status" value="1"/>
</dbReference>
<dbReference type="SMART" id="SM00278">
    <property type="entry name" value="HhH1"/>
    <property type="match status" value="3"/>
</dbReference>
<dbReference type="SMART" id="SM00532">
    <property type="entry name" value="LIGANc"/>
    <property type="match status" value="1"/>
</dbReference>
<dbReference type="SUPFAM" id="SSF52113">
    <property type="entry name" value="BRCT domain"/>
    <property type="match status" value="1"/>
</dbReference>
<dbReference type="SUPFAM" id="SSF56091">
    <property type="entry name" value="DNA ligase/mRNA capping enzyme, catalytic domain"/>
    <property type="match status" value="1"/>
</dbReference>
<dbReference type="SUPFAM" id="SSF50249">
    <property type="entry name" value="Nucleic acid-binding proteins"/>
    <property type="match status" value="1"/>
</dbReference>
<dbReference type="SUPFAM" id="SSF47781">
    <property type="entry name" value="RuvA domain 2-like"/>
    <property type="match status" value="1"/>
</dbReference>
<dbReference type="PROSITE" id="PS50172">
    <property type="entry name" value="BRCT"/>
    <property type="match status" value="1"/>
</dbReference>
<dbReference type="PROSITE" id="PS01055">
    <property type="entry name" value="DNA_LIGASE_N1"/>
    <property type="match status" value="1"/>
</dbReference>
<dbReference type="PROSITE" id="PS01056">
    <property type="entry name" value="DNA_LIGASE_N2"/>
    <property type="match status" value="1"/>
</dbReference>
<evidence type="ECO:0000255" key="1">
    <source>
        <dbReference type="HAMAP-Rule" id="MF_01588"/>
    </source>
</evidence>
<accession>Q65MR2</accession>
<accession>Q62Y56</accession>
<name>DNLJ_BACLD</name>
<organism>
    <name type="scientific">Bacillus licheniformis (strain ATCC 14580 / DSM 13 / JCM 2505 / CCUG 7422 / NBRC 12200 / NCIMB 9375 / NCTC 10341 / NRRL NRS-1264 / Gibson 46)</name>
    <dbReference type="NCBI Taxonomy" id="279010"/>
    <lineage>
        <taxon>Bacteria</taxon>
        <taxon>Bacillati</taxon>
        <taxon>Bacillota</taxon>
        <taxon>Bacilli</taxon>
        <taxon>Bacillales</taxon>
        <taxon>Bacillaceae</taxon>
        <taxon>Bacillus</taxon>
    </lineage>
</organism>
<keyword id="KW-0227">DNA damage</keyword>
<keyword id="KW-0234">DNA repair</keyword>
<keyword id="KW-0235">DNA replication</keyword>
<keyword id="KW-0436">Ligase</keyword>
<keyword id="KW-0460">Magnesium</keyword>
<keyword id="KW-0464">Manganese</keyword>
<keyword id="KW-0479">Metal-binding</keyword>
<keyword id="KW-0520">NAD</keyword>
<keyword id="KW-1185">Reference proteome</keyword>
<keyword id="KW-0862">Zinc</keyword>
<comment type="function">
    <text evidence="1">DNA ligase that catalyzes the formation of phosphodiester linkages between 5'-phosphoryl and 3'-hydroxyl groups in double-stranded DNA using NAD as a coenzyme and as the energy source for the reaction. It is essential for DNA replication and repair of damaged DNA.</text>
</comment>
<comment type="catalytic activity">
    <reaction evidence="1">
        <text>NAD(+) + (deoxyribonucleotide)n-3'-hydroxyl + 5'-phospho-(deoxyribonucleotide)m = (deoxyribonucleotide)n+m + AMP + beta-nicotinamide D-nucleotide.</text>
        <dbReference type="EC" id="6.5.1.2"/>
    </reaction>
</comment>
<comment type="cofactor">
    <cofactor evidence="1">
        <name>Mg(2+)</name>
        <dbReference type="ChEBI" id="CHEBI:18420"/>
    </cofactor>
    <cofactor evidence="1">
        <name>Mn(2+)</name>
        <dbReference type="ChEBI" id="CHEBI:29035"/>
    </cofactor>
</comment>
<comment type="similarity">
    <text evidence="1">Belongs to the NAD-dependent DNA ligase family. LigA subfamily.</text>
</comment>
<protein>
    <recommendedName>
        <fullName evidence="1">DNA ligase</fullName>
        <ecNumber evidence="1">6.5.1.2</ecNumber>
    </recommendedName>
    <alternativeName>
        <fullName evidence="1">Polydeoxyribonucleotide synthase [NAD(+)]</fullName>
    </alternativeName>
</protein>
<gene>
    <name evidence="1" type="primary">ligA</name>
    <name type="ordered locus">BLi00716</name>
    <name type="ordered locus">BL00589</name>
</gene>
<reference key="1">
    <citation type="journal article" date="2004" name="J. Mol. Microbiol. Biotechnol.">
        <title>The complete genome sequence of Bacillus licheniformis DSM13, an organism with great industrial potential.</title>
        <authorList>
            <person name="Veith B."/>
            <person name="Herzberg C."/>
            <person name="Steckel S."/>
            <person name="Feesche J."/>
            <person name="Maurer K.H."/>
            <person name="Ehrenreich P."/>
            <person name="Baeumer S."/>
            <person name="Henne A."/>
            <person name="Liesegang H."/>
            <person name="Merkl R."/>
            <person name="Ehrenreich A."/>
            <person name="Gottschalk G."/>
        </authorList>
    </citation>
    <scope>NUCLEOTIDE SEQUENCE [LARGE SCALE GENOMIC DNA]</scope>
    <source>
        <strain>ATCC 14580 / DSM 13 / JCM 2505 / CCUG 7422 / NBRC 12200 / NCIMB 9375 / NCTC 10341 / NRRL NRS-1264 / Gibson 46</strain>
    </source>
</reference>
<reference key="2">
    <citation type="journal article" date="2004" name="Genome Biol.">
        <title>Complete genome sequence of the industrial bacterium Bacillus licheniformis and comparisons with closely related Bacillus species.</title>
        <authorList>
            <person name="Rey M.W."/>
            <person name="Ramaiya P."/>
            <person name="Nelson B.A."/>
            <person name="Brody-Karpin S.D."/>
            <person name="Zaretsky E.J."/>
            <person name="Tang M."/>
            <person name="Lopez de Leon A."/>
            <person name="Xiang H."/>
            <person name="Gusti V."/>
            <person name="Clausen I.G."/>
            <person name="Olsen P.B."/>
            <person name="Rasmussen M.D."/>
            <person name="Andersen J.T."/>
            <person name="Joergensen P.L."/>
            <person name="Larsen T.S."/>
            <person name="Sorokin A."/>
            <person name="Bolotin A."/>
            <person name="Lapidus A."/>
            <person name="Galleron N."/>
            <person name="Ehrlich S.D."/>
            <person name="Berka R.M."/>
        </authorList>
    </citation>
    <scope>NUCLEOTIDE SEQUENCE [LARGE SCALE GENOMIC DNA]</scope>
    <source>
        <strain>ATCC 14580 / DSM 13 / JCM 2505 / CCUG 7422 / NBRC 12200 / NCIMB 9375 / NCTC 10341 / NRRL NRS-1264 / Gibson 46</strain>
    </source>
</reference>
<sequence>MEKEAAKRRVEQLHALINKYNYEYHTLDDPSVPDSEYDKLMKELIALEEEHPDLKTPDSPSQRVGGAVLDAFQKVQHKTPMLSLGNAFNEEDLRDFDRRVRQAVGDVEYNVEFKIDGLAVSLRYENGVFVRGATRGDGTTGEDITENLKTIRNIPLRMKRDLSIEVRGEAFMPKRSFELLNKARIERDEEPFANPRNAAAGSLRQLDPKIAAKRNLDIFVYSIAELDEMGVETQSQGLDFLDELGFKTNHERKKCSTIEEVIEIVEELKTKRADLPYEIDGIVIKVDSLDQQEELGFTAKSPRWAIAYKFPAEEVVTTLLDIELSVGRTGAVTPTAILEPVKVAGTTVQRASLHNEDLIKEKDIRLLDKVVVKKAGDIIPEVVNVLVEQRTGKEKEFNMPKECPECGSELVRIEGEVALRCINPECPAQIREGLIHFVSRNAMNIDGLGERVITQLFREDLVHNVADLYKLTREQLINLERMGEKSTDNLLNSIEKSKKNSLERLLFGLGIRFIGAKAAKTLAMHFETLDKLKKATKEELIEVDEIGDKMADALVTYFEKEEILKLLDELEELGVNTVYKGPKKAAAEASDSYFAGKTIVLTGKLSEMSRNDAKAEIEALGGKITGSVSKKTDLVIAGEAAGSKLAKAEDLNIEVWDEARLISELKK</sequence>
<feature type="chain" id="PRO_0000313127" description="DNA ligase">
    <location>
        <begin position="1"/>
        <end position="667"/>
    </location>
</feature>
<feature type="domain" description="BRCT" evidence="1">
    <location>
        <begin position="589"/>
        <end position="667"/>
    </location>
</feature>
<feature type="active site" description="N6-AMP-lysine intermediate" evidence="1">
    <location>
        <position position="114"/>
    </location>
</feature>
<feature type="binding site" evidence="1">
    <location>
        <begin position="34"/>
        <end position="38"/>
    </location>
    <ligand>
        <name>NAD(+)</name>
        <dbReference type="ChEBI" id="CHEBI:57540"/>
    </ligand>
</feature>
<feature type="binding site" evidence="1">
    <location>
        <begin position="83"/>
        <end position="84"/>
    </location>
    <ligand>
        <name>NAD(+)</name>
        <dbReference type="ChEBI" id="CHEBI:57540"/>
    </ligand>
</feature>
<feature type="binding site" evidence="1">
    <location>
        <position position="112"/>
    </location>
    <ligand>
        <name>NAD(+)</name>
        <dbReference type="ChEBI" id="CHEBI:57540"/>
    </ligand>
</feature>
<feature type="binding site" evidence="1">
    <location>
        <position position="135"/>
    </location>
    <ligand>
        <name>NAD(+)</name>
        <dbReference type="ChEBI" id="CHEBI:57540"/>
    </ligand>
</feature>
<feature type="binding site" evidence="1">
    <location>
        <position position="169"/>
    </location>
    <ligand>
        <name>NAD(+)</name>
        <dbReference type="ChEBI" id="CHEBI:57540"/>
    </ligand>
</feature>
<feature type="binding site" evidence="1">
    <location>
        <position position="285"/>
    </location>
    <ligand>
        <name>NAD(+)</name>
        <dbReference type="ChEBI" id="CHEBI:57540"/>
    </ligand>
</feature>
<feature type="binding site" evidence="1">
    <location>
        <position position="309"/>
    </location>
    <ligand>
        <name>NAD(+)</name>
        <dbReference type="ChEBI" id="CHEBI:57540"/>
    </ligand>
</feature>
<feature type="binding site" evidence="1">
    <location>
        <position position="403"/>
    </location>
    <ligand>
        <name>Zn(2+)</name>
        <dbReference type="ChEBI" id="CHEBI:29105"/>
    </ligand>
</feature>
<feature type="binding site" evidence="1">
    <location>
        <position position="406"/>
    </location>
    <ligand>
        <name>Zn(2+)</name>
        <dbReference type="ChEBI" id="CHEBI:29105"/>
    </ligand>
</feature>
<feature type="binding site" evidence="1">
    <location>
        <position position="421"/>
    </location>
    <ligand>
        <name>Zn(2+)</name>
        <dbReference type="ChEBI" id="CHEBI:29105"/>
    </ligand>
</feature>
<feature type="binding site" evidence="1">
    <location>
        <position position="426"/>
    </location>
    <ligand>
        <name>Zn(2+)</name>
        <dbReference type="ChEBI" id="CHEBI:29105"/>
    </ligand>
</feature>